<keyword id="KW-0067">ATP-binding</keyword>
<keyword id="KW-0997">Cell inner membrane</keyword>
<keyword id="KW-1003">Cell membrane</keyword>
<keyword id="KW-0472">Membrane</keyword>
<keyword id="KW-0547">Nucleotide-binding</keyword>
<keyword id="KW-1185">Reference proteome</keyword>
<keyword id="KW-1278">Translocase</keyword>
<keyword id="KW-0813">Transport</keyword>
<dbReference type="EC" id="7.6.2.15" evidence="1"/>
<dbReference type="EMBL" id="AE005674">
    <property type="protein sequence ID" value="AAN41726.2"/>
    <property type="molecule type" value="Genomic_DNA"/>
</dbReference>
<dbReference type="EMBL" id="AE014073">
    <property type="protein sequence ID" value="AAP15607.1"/>
    <property type="molecule type" value="Genomic_DNA"/>
</dbReference>
<dbReference type="RefSeq" id="NP_706019.2">
    <property type="nucleotide sequence ID" value="NC_004337.2"/>
</dbReference>
<dbReference type="RefSeq" id="WP_000916290.1">
    <property type="nucleotide sequence ID" value="NZ_CP123365.1"/>
</dbReference>
<dbReference type="SMR" id="Q83MG3"/>
<dbReference type="STRING" id="198214.SF0061"/>
<dbReference type="PaxDb" id="198214-SF0061"/>
<dbReference type="GeneID" id="1024580"/>
<dbReference type="KEGG" id="sfl:SF0061"/>
<dbReference type="KEGG" id="sfx:S0063"/>
<dbReference type="PATRIC" id="fig|198214.7.peg.72"/>
<dbReference type="HOGENOM" id="CLU_000604_1_22_6"/>
<dbReference type="Proteomes" id="UP000001006">
    <property type="component" value="Chromosome"/>
</dbReference>
<dbReference type="Proteomes" id="UP000002673">
    <property type="component" value="Chromosome"/>
</dbReference>
<dbReference type="GO" id="GO:0005886">
    <property type="term" value="C:plasma membrane"/>
    <property type="evidence" value="ECO:0007669"/>
    <property type="project" value="UniProtKB-SubCell"/>
</dbReference>
<dbReference type="GO" id="GO:0048502">
    <property type="term" value="F:ABC-type thiamine transporter activity"/>
    <property type="evidence" value="ECO:0007669"/>
    <property type="project" value="UniProtKB-EC"/>
</dbReference>
<dbReference type="GO" id="GO:0005524">
    <property type="term" value="F:ATP binding"/>
    <property type="evidence" value="ECO:0007669"/>
    <property type="project" value="UniProtKB-KW"/>
</dbReference>
<dbReference type="GO" id="GO:0016887">
    <property type="term" value="F:ATP hydrolysis activity"/>
    <property type="evidence" value="ECO:0007669"/>
    <property type="project" value="InterPro"/>
</dbReference>
<dbReference type="CDD" id="cd03298">
    <property type="entry name" value="ABC_ThiQ_thiamine_transporter"/>
    <property type="match status" value="1"/>
</dbReference>
<dbReference type="FunFam" id="3.40.50.300:FF:001071">
    <property type="entry name" value="Thiamine import ATP-binding protein ThiQ"/>
    <property type="match status" value="1"/>
</dbReference>
<dbReference type="Gene3D" id="3.40.50.300">
    <property type="entry name" value="P-loop containing nucleotide triphosphate hydrolases"/>
    <property type="match status" value="1"/>
</dbReference>
<dbReference type="InterPro" id="IPR003593">
    <property type="entry name" value="AAA+_ATPase"/>
</dbReference>
<dbReference type="InterPro" id="IPR050093">
    <property type="entry name" value="ABC_SmlMolc_Importer"/>
</dbReference>
<dbReference type="InterPro" id="IPR003439">
    <property type="entry name" value="ABC_transporter-like_ATP-bd"/>
</dbReference>
<dbReference type="InterPro" id="IPR017871">
    <property type="entry name" value="ABC_transporter-like_CS"/>
</dbReference>
<dbReference type="InterPro" id="IPR027417">
    <property type="entry name" value="P-loop_NTPase"/>
</dbReference>
<dbReference type="InterPro" id="IPR005968">
    <property type="entry name" value="Thiamine_ABC_ThiQ"/>
</dbReference>
<dbReference type="NCBIfam" id="NF008039">
    <property type="entry name" value="PRK10771.1"/>
    <property type="match status" value="1"/>
</dbReference>
<dbReference type="NCBIfam" id="TIGR01277">
    <property type="entry name" value="thiQ"/>
    <property type="match status" value="1"/>
</dbReference>
<dbReference type="PANTHER" id="PTHR42781">
    <property type="entry name" value="SPERMIDINE/PUTRESCINE IMPORT ATP-BINDING PROTEIN POTA"/>
    <property type="match status" value="1"/>
</dbReference>
<dbReference type="PANTHER" id="PTHR42781:SF1">
    <property type="entry name" value="THIAMINE IMPORT ATP-BINDING PROTEIN THIQ"/>
    <property type="match status" value="1"/>
</dbReference>
<dbReference type="Pfam" id="PF00005">
    <property type="entry name" value="ABC_tran"/>
    <property type="match status" value="1"/>
</dbReference>
<dbReference type="SMART" id="SM00382">
    <property type="entry name" value="AAA"/>
    <property type="match status" value="1"/>
</dbReference>
<dbReference type="SUPFAM" id="SSF52540">
    <property type="entry name" value="P-loop containing nucleoside triphosphate hydrolases"/>
    <property type="match status" value="1"/>
</dbReference>
<dbReference type="PROSITE" id="PS00211">
    <property type="entry name" value="ABC_TRANSPORTER_1"/>
    <property type="match status" value="1"/>
</dbReference>
<dbReference type="PROSITE" id="PS50893">
    <property type="entry name" value="ABC_TRANSPORTER_2"/>
    <property type="match status" value="1"/>
</dbReference>
<dbReference type="PROSITE" id="PS51288">
    <property type="entry name" value="THIQ"/>
    <property type="match status" value="1"/>
</dbReference>
<proteinExistence type="inferred from homology"/>
<feature type="chain" id="PRO_0000274460" description="Thiamine import ATP-binding protein ThiQ">
    <location>
        <begin position="1"/>
        <end position="232"/>
    </location>
</feature>
<feature type="domain" description="ABC transporter" evidence="1">
    <location>
        <begin position="2"/>
        <end position="230"/>
    </location>
</feature>
<feature type="binding site" evidence="1">
    <location>
        <begin position="32"/>
        <end position="39"/>
    </location>
    <ligand>
        <name>ATP</name>
        <dbReference type="ChEBI" id="CHEBI:30616"/>
    </ligand>
</feature>
<feature type="sequence conflict" description="In Ref. 2; AAP15607." evidence="2" ref="2">
    <original>V</original>
    <variation>L</variation>
    <location>
        <position position="217"/>
    </location>
</feature>
<feature type="sequence conflict" description="In Ref. 2; AAP15607." evidence="2" ref="2">
    <original>G</original>
    <variation>A</variation>
    <location>
        <position position="222"/>
    </location>
</feature>
<feature type="sequence conflict" description="In Ref. 2; AAP15607." evidence="2" ref="2">
    <original>W</original>
    <variation>L</variation>
    <location>
        <position position="228"/>
    </location>
</feature>
<feature type="sequence conflict" description="In Ref. 2; AAP15607." evidence="2" ref="2">
    <original>Q</original>
    <variation>T</variation>
    <location>
        <position position="231"/>
    </location>
</feature>
<protein>
    <recommendedName>
        <fullName evidence="1">Thiamine import ATP-binding protein ThiQ</fullName>
        <ecNumber evidence="1">7.6.2.15</ecNumber>
    </recommendedName>
</protein>
<accession>Q83MG3</accession>
<accession>Q7UDT2</accession>
<evidence type="ECO:0000255" key="1">
    <source>
        <dbReference type="HAMAP-Rule" id="MF_01723"/>
    </source>
</evidence>
<evidence type="ECO:0000305" key="2"/>
<comment type="function">
    <text evidence="1">Part of the ABC transporter complex ThiBPQ involved in thiamine import. Responsible for energy coupling to the transport system.</text>
</comment>
<comment type="catalytic activity">
    <reaction evidence="1">
        <text>thiamine(out) + ATP + H2O = thiamine(in) + ADP + phosphate + H(+)</text>
        <dbReference type="Rhea" id="RHEA:29811"/>
        <dbReference type="ChEBI" id="CHEBI:15377"/>
        <dbReference type="ChEBI" id="CHEBI:15378"/>
        <dbReference type="ChEBI" id="CHEBI:18385"/>
        <dbReference type="ChEBI" id="CHEBI:30616"/>
        <dbReference type="ChEBI" id="CHEBI:43474"/>
        <dbReference type="ChEBI" id="CHEBI:456216"/>
        <dbReference type="EC" id="7.6.2.15"/>
    </reaction>
</comment>
<comment type="subunit">
    <text evidence="1">The complex is composed of two ATP-binding proteins (ThiQ), two transmembrane proteins (ThiP) and a solute-binding protein (ThiB).</text>
</comment>
<comment type="subcellular location">
    <subcellularLocation>
        <location evidence="1">Cell inner membrane</location>
        <topology evidence="1">Peripheral membrane protein</topology>
    </subcellularLocation>
</comment>
<comment type="similarity">
    <text evidence="1">Belongs to the ABC transporter superfamily. Thiamine importer (TC 3.A.1.19.1) family.</text>
</comment>
<organism>
    <name type="scientific">Shigella flexneri</name>
    <dbReference type="NCBI Taxonomy" id="623"/>
    <lineage>
        <taxon>Bacteria</taxon>
        <taxon>Pseudomonadati</taxon>
        <taxon>Pseudomonadota</taxon>
        <taxon>Gammaproteobacteria</taxon>
        <taxon>Enterobacterales</taxon>
        <taxon>Enterobacteriaceae</taxon>
        <taxon>Shigella</taxon>
    </lineage>
</organism>
<name>THIQ_SHIFL</name>
<sequence length="232" mass="25097">MLKLTDITWLYHHLPMRFSLTVERGEQVAILGPSGAGKSTLLNLIAGFLTPASGSLTIDGVDHTTTPPSRRPVSMLFQENNLFSHLTVAQNIGLGLNPGLKLNAAQQEKMHAIARQMGIDNLMARLPGELSGGQRQRVALARCLVREQPILLLDEPFSALDPALRQEMLTLVSTSCQQQKMTLLMVSHSVEDAARIATRSVVVADGRIAWQGKTEEVLSGKGSASAIWGIQG</sequence>
<reference key="1">
    <citation type="journal article" date="2002" name="Nucleic Acids Res.">
        <title>Genome sequence of Shigella flexneri 2a: insights into pathogenicity through comparison with genomes of Escherichia coli K12 and O157.</title>
        <authorList>
            <person name="Jin Q."/>
            <person name="Yuan Z."/>
            <person name="Xu J."/>
            <person name="Wang Y."/>
            <person name="Shen Y."/>
            <person name="Lu W."/>
            <person name="Wang J."/>
            <person name="Liu H."/>
            <person name="Yang J."/>
            <person name="Yang F."/>
            <person name="Zhang X."/>
            <person name="Zhang J."/>
            <person name="Yang G."/>
            <person name="Wu H."/>
            <person name="Qu D."/>
            <person name="Dong J."/>
            <person name="Sun L."/>
            <person name="Xue Y."/>
            <person name="Zhao A."/>
            <person name="Gao Y."/>
            <person name="Zhu J."/>
            <person name="Kan B."/>
            <person name="Ding K."/>
            <person name="Chen S."/>
            <person name="Cheng H."/>
            <person name="Yao Z."/>
            <person name="He B."/>
            <person name="Chen R."/>
            <person name="Ma D."/>
            <person name="Qiang B."/>
            <person name="Wen Y."/>
            <person name="Hou Y."/>
            <person name="Yu J."/>
        </authorList>
    </citation>
    <scope>NUCLEOTIDE SEQUENCE [LARGE SCALE GENOMIC DNA]</scope>
    <source>
        <strain>301 / Serotype 2a</strain>
    </source>
</reference>
<reference key="2">
    <citation type="journal article" date="2003" name="Infect. Immun.">
        <title>Complete genome sequence and comparative genomics of Shigella flexneri serotype 2a strain 2457T.</title>
        <authorList>
            <person name="Wei J."/>
            <person name="Goldberg M.B."/>
            <person name="Burland V."/>
            <person name="Venkatesan M.M."/>
            <person name="Deng W."/>
            <person name="Fournier G."/>
            <person name="Mayhew G.F."/>
            <person name="Plunkett G. III"/>
            <person name="Rose D.J."/>
            <person name="Darling A."/>
            <person name="Mau B."/>
            <person name="Perna N.T."/>
            <person name="Payne S.M."/>
            <person name="Runyen-Janecky L.J."/>
            <person name="Zhou S."/>
            <person name="Schwartz D.C."/>
            <person name="Blattner F.R."/>
        </authorList>
    </citation>
    <scope>NUCLEOTIDE SEQUENCE [LARGE SCALE GENOMIC DNA]</scope>
    <source>
        <strain>ATCC 700930 / 2457T / Serotype 2a</strain>
    </source>
</reference>
<gene>
    <name evidence="1" type="primary">thiQ</name>
    <name type="ordered locus">SF0061</name>
    <name type="ordered locus">S0063</name>
</gene>